<reference key="1">
    <citation type="journal article" date="2005" name="Science">
        <title>Extensive DNA inversions in the B. fragilis genome control variable gene expression.</title>
        <authorList>
            <person name="Cerdeno-Tarraga A.-M."/>
            <person name="Patrick S."/>
            <person name="Crossman L.C."/>
            <person name="Blakely G."/>
            <person name="Abratt V."/>
            <person name="Lennard N."/>
            <person name="Poxton I."/>
            <person name="Duerden B."/>
            <person name="Harris B."/>
            <person name="Quail M.A."/>
            <person name="Barron A."/>
            <person name="Clark L."/>
            <person name="Corton C."/>
            <person name="Doggett J."/>
            <person name="Holden M.T.G."/>
            <person name="Larke N."/>
            <person name="Line A."/>
            <person name="Lord A."/>
            <person name="Norbertczak H."/>
            <person name="Ormond D."/>
            <person name="Price C."/>
            <person name="Rabbinowitsch E."/>
            <person name="Woodward J."/>
            <person name="Barrell B.G."/>
            <person name="Parkhill J."/>
        </authorList>
    </citation>
    <scope>NUCLEOTIDE SEQUENCE [LARGE SCALE GENOMIC DNA]</scope>
    <source>
        <strain>ATCC 25285 / DSM 2151 / CCUG 4856 / JCM 11019 / LMG 10263 / NCTC 9343 / Onslow / VPI 2553 / EN-2</strain>
    </source>
</reference>
<organism>
    <name type="scientific">Bacteroides fragilis (strain ATCC 25285 / DSM 2151 / CCUG 4856 / JCM 11019 / LMG 10263 / NCTC 9343 / Onslow / VPI 2553 / EN-2)</name>
    <dbReference type="NCBI Taxonomy" id="272559"/>
    <lineage>
        <taxon>Bacteria</taxon>
        <taxon>Pseudomonadati</taxon>
        <taxon>Bacteroidota</taxon>
        <taxon>Bacteroidia</taxon>
        <taxon>Bacteroidales</taxon>
        <taxon>Bacteroidaceae</taxon>
        <taxon>Bacteroides</taxon>
    </lineage>
</organism>
<comment type="function">
    <text evidence="1">Nucleoside triphosphate pyrophosphatase that hydrolyzes dTTP and UTP. May have a dual role in cell division arrest and in preventing the incorporation of modified nucleotides into cellular nucleic acids.</text>
</comment>
<comment type="catalytic activity">
    <reaction evidence="1">
        <text>dTTP + H2O = dTMP + diphosphate + H(+)</text>
        <dbReference type="Rhea" id="RHEA:28534"/>
        <dbReference type="ChEBI" id="CHEBI:15377"/>
        <dbReference type="ChEBI" id="CHEBI:15378"/>
        <dbReference type="ChEBI" id="CHEBI:33019"/>
        <dbReference type="ChEBI" id="CHEBI:37568"/>
        <dbReference type="ChEBI" id="CHEBI:63528"/>
        <dbReference type="EC" id="3.6.1.9"/>
    </reaction>
</comment>
<comment type="catalytic activity">
    <reaction evidence="1">
        <text>UTP + H2O = UMP + diphosphate + H(+)</text>
        <dbReference type="Rhea" id="RHEA:29395"/>
        <dbReference type="ChEBI" id="CHEBI:15377"/>
        <dbReference type="ChEBI" id="CHEBI:15378"/>
        <dbReference type="ChEBI" id="CHEBI:33019"/>
        <dbReference type="ChEBI" id="CHEBI:46398"/>
        <dbReference type="ChEBI" id="CHEBI:57865"/>
        <dbReference type="EC" id="3.6.1.9"/>
    </reaction>
</comment>
<comment type="cofactor">
    <cofactor evidence="1">
        <name>a divalent metal cation</name>
        <dbReference type="ChEBI" id="CHEBI:60240"/>
    </cofactor>
</comment>
<comment type="subcellular location">
    <subcellularLocation>
        <location evidence="1">Cytoplasm</location>
    </subcellularLocation>
</comment>
<comment type="similarity">
    <text evidence="1">Belongs to the Maf family. YhdE subfamily.</text>
</comment>
<name>NTPPA_BACFN</name>
<accession>Q5LAQ8</accession>
<gene>
    <name type="ordered locus">BF3120</name>
</gene>
<evidence type="ECO:0000255" key="1">
    <source>
        <dbReference type="HAMAP-Rule" id="MF_00528"/>
    </source>
</evidence>
<keyword id="KW-0963">Cytoplasm</keyword>
<keyword id="KW-0378">Hydrolase</keyword>
<keyword id="KW-0546">Nucleotide metabolism</keyword>
<feature type="chain" id="PRO_0000267249" description="dTTP/UTP pyrophosphatase">
    <location>
        <begin position="1"/>
        <end position="193"/>
    </location>
</feature>
<feature type="active site" description="Proton acceptor" evidence="1">
    <location>
        <position position="77"/>
    </location>
</feature>
<feature type="site" description="Important for substrate specificity" evidence="1">
    <location>
        <position position="18"/>
    </location>
</feature>
<feature type="site" description="Important for substrate specificity" evidence="1">
    <location>
        <position position="78"/>
    </location>
</feature>
<feature type="site" description="Important for substrate specificity" evidence="1">
    <location>
        <position position="160"/>
    </location>
</feature>
<protein>
    <recommendedName>
        <fullName evidence="1">dTTP/UTP pyrophosphatase</fullName>
        <shortName evidence="1">dTTPase/UTPase</shortName>
        <ecNumber evidence="1">3.6.1.9</ecNumber>
    </recommendedName>
    <alternativeName>
        <fullName evidence="1">Nucleoside triphosphate pyrophosphatase</fullName>
    </alternativeName>
    <alternativeName>
        <fullName evidence="1">Nucleotide pyrophosphatase</fullName>
        <shortName evidence="1">Nucleotide PPase</shortName>
    </alternativeName>
</protein>
<proteinExistence type="inferred from homology"/>
<dbReference type="EC" id="3.6.1.9" evidence="1"/>
<dbReference type="EMBL" id="CR626927">
    <property type="protein sequence ID" value="CAH08815.1"/>
    <property type="molecule type" value="Genomic_DNA"/>
</dbReference>
<dbReference type="RefSeq" id="WP_008769613.1">
    <property type="nucleotide sequence ID" value="NZ_UFTH01000001.1"/>
</dbReference>
<dbReference type="SMR" id="Q5LAQ8"/>
<dbReference type="PaxDb" id="272559-BF9343_3034"/>
<dbReference type="KEGG" id="bfs:BF9343_3034"/>
<dbReference type="eggNOG" id="COG0424">
    <property type="taxonomic scope" value="Bacteria"/>
</dbReference>
<dbReference type="HOGENOM" id="CLU_040416_0_0_10"/>
<dbReference type="Proteomes" id="UP000006731">
    <property type="component" value="Chromosome"/>
</dbReference>
<dbReference type="GO" id="GO:0005737">
    <property type="term" value="C:cytoplasm"/>
    <property type="evidence" value="ECO:0007669"/>
    <property type="project" value="UniProtKB-SubCell"/>
</dbReference>
<dbReference type="GO" id="GO:0036218">
    <property type="term" value="F:dTTP diphosphatase activity"/>
    <property type="evidence" value="ECO:0007669"/>
    <property type="project" value="RHEA"/>
</dbReference>
<dbReference type="GO" id="GO:0036221">
    <property type="term" value="F:UTP diphosphatase activity"/>
    <property type="evidence" value="ECO:0007669"/>
    <property type="project" value="RHEA"/>
</dbReference>
<dbReference type="GO" id="GO:0009117">
    <property type="term" value="P:nucleotide metabolic process"/>
    <property type="evidence" value="ECO:0007669"/>
    <property type="project" value="UniProtKB-KW"/>
</dbReference>
<dbReference type="CDD" id="cd00555">
    <property type="entry name" value="Maf"/>
    <property type="match status" value="1"/>
</dbReference>
<dbReference type="FunFam" id="3.90.950.10:FF:000005">
    <property type="entry name" value="7-methyl-GTP pyrophosphatase"/>
    <property type="match status" value="1"/>
</dbReference>
<dbReference type="Gene3D" id="3.90.950.10">
    <property type="match status" value="1"/>
</dbReference>
<dbReference type="HAMAP" id="MF_00528">
    <property type="entry name" value="Maf"/>
    <property type="match status" value="1"/>
</dbReference>
<dbReference type="InterPro" id="IPR029001">
    <property type="entry name" value="ITPase-like_fam"/>
</dbReference>
<dbReference type="InterPro" id="IPR003697">
    <property type="entry name" value="Maf-like"/>
</dbReference>
<dbReference type="NCBIfam" id="TIGR00172">
    <property type="entry name" value="maf"/>
    <property type="match status" value="1"/>
</dbReference>
<dbReference type="PANTHER" id="PTHR43213">
    <property type="entry name" value="BIFUNCTIONAL DTTP/UTP PYROPHOSPHATASE/METHYLTRANSFERASE PROTEIN-RELATED"/>
    <property type="match status" value="1"/>
</dbReference>
<dbReference type="PANTHER" id="PTHR43213:SF5">
    <property type="entry name" value="BIFUNCTIONAL DTTP_UTP PYROPHOSPHATASE_METHYLTRANSFERASE PROTEIN-RELATED"/>
    <property type="match status" value="1"/>
</dbReference>
<dbReference type="Pfam" id="PF02545">
    <property type="entry name" value="Maf"/>
    <property type="match status" value="1"/>
</dbReference>
<dbReference type="PIRSF" id="PIRSF006305">
    <property type="entry name" value="Maf"/>
    <property type="match status" value="1"/>
</dbReference>
<dbReference type="SUPFAM" id="SSF52972">
    <property type="entry name" value="ITPase-like"/>
    <property type="match status" value="1"/>
</dbReference>
<sequence length="193" mass="21681">MLANLDRYKIVLASNSPRRKELMTGLGVDYVVKTLPDVDESYPDTLQGEEIPLFIAREKAAAYQSMIGPEELLITADTIVWHEGKALGKPVGRQDAIEMLRSLSGKSHQVITGVCLTTREWQKCFAAVTDVRFAILDEDEIAYYVDHYQPMDKAGSYGVQEWIGFVGVESISGSYFNVMGLPIQKLYRELKQL</sequence>